<name>Y906_TREDE</name>
<comment type="function">
    <text evidence="1">Probably part of an ABC transporter complex. Responsible for energy coupling to the transport system (By similarity).</text>
</comment>
<comment type="subcellular location">
    <subcellularLocation>
        <location evidence="1">Cell inner membrane</location>
        <topology evidence="1">Peripheral membrane protein</topology>
    </subcellularLocation>
</comment>
<comment type="similarity">
    <text evidence="3">Belongs to the ABC transporter superfamily.</text>
</comment>
<proteinExistence type="inferred from homology"/>
<protein>
    <recommendedName>
        <fullName>Putative ABC transporter ATP-binding protein TDE_0906</fullName>
        <ecNumber>7.-.-.-</ecNumber>
    </recommendedName>
</protein>
<gene>
    <name type="ordered locus">TDE_0906</name>
</gene>
<evidence type="ECO:0000250" key="1"/>
<evidence type="ECO:0000255" key="2">
    <source>
        <dbReference type="PROSITE-ProRule" id="PRU00434"/>
    </source>
</evidence>
<evidence type="ECO:0000305" key="3"/>
<organism>
    <name type="scientific">Treponema denticola (strain ATCC 35405 / DSM 14222 / CIP 103919 / JCM 8153 / KCTC 15104)</name>
    <dbReference type="NCBI Taxonomy" id="243275"/>
    <lineage>
        <taxon>Bacteria</taxon>
        <taxon>Pseudomonadati</taxon>
        <taxon>Spirochaetota</taxon>
        <taxon>Spirochaetia</taxon>
        <taxon>Spirochaetales</taxon>
        <taxon>Treponemataceae</taxon>
        <taxon>Treponema</taxon>
    </lineage>
</organism>
<sequence>MINLNDVSYKYNDTAAQAIQHISLSVKKGELVVITGKSGCGKTTLFRCVNGLCPRFYEGEITGSLTLNGKVLSSMRICDISNIAASVFQNPESQFFTTDVLSDLVYPCENCGIEKEEIQERLHRVTKLLSLEPLLNRKLSELSGGEKQKIAIASVLMLDTRVVLMDEPSSNLDYQSVELLTQILAQLKSKGYTLLIIEHRLHYLAELCDRLIVMENGSIVREYEKDLLCTIGNDEFHKQGLRGLHLFQNNSNTLITPQRQHTDKRLLTLHDIHFGYRKNTEVLKGIHLSIYPGDKIALIGKNGCGKTTLGKILCGLKKEQSGTVLLDGRSFPARVRSKTAGYVMQNVDFQLFGCSVYDDLLLGNEALPDKENRIQTVLEKLSLSALQEQHPTTLSMGQKQRLVVAASFLQNKRLTIFDEPTSGLDYGSMQNVCALIDSITGKTNASVIITHDYEFILNTCNRAVLLEDGQIKEDFQLNGSMQLEYIFKERL</sequence>
<accession>Q73P93</accession>
<feature type="chain" id="PRO_0000092122" description="Putative ABC transporter ATP-binding protein TDE_0906">
    <location>
        <begin position="1"/>
        <end position="491"/>
    </location>
</feature>
<feature type="domain" description="ABC transporter 1" evidence="2">
    <location>
        <begin position="2"/>
        <end position="241"/>
    </location>
</feature>
<feature type="domain" description="ABC transporter 2" evidence="2">
    <location>
        <begin position="267"/>
        <end position="491"/>
    </location>
</feature>
<feature type="binding site" evidence="2">
    <location>
        <begin position="36"/>
        <end position="43"/>
    </location>
    <ligand>
        <name>ATP</name>
        <dbReference type="ChEBI" id="CHEBI:30616"/>
        <label>1</label>
    </ligand>
</feature>
<feature type="binding site" evidence="2">
    <location>
        <begin position="300"/>
        <end position="307"/>
    </location>
    <ligand>
        <name>ATP</name>
        <dbReference type="ChEBI" id="CHEBI:30616"/>
        <label>2</label>
    </ligand>
</feature>
<keyword id="KW-0067">ATP-binding</keyword>
<keyword id="KW-0997">Cell inner membrane</keyword>
<keyword id="KW-1003">Cell membrane</keyword>
<keyword id="KW-0472">Membrane</keyword>
<keyword id="KW-0547">Nucleotide-binding</keyword>
<keyword id="KW-1185">Reference proteome</keyword>
<keyword id="KW-0677">Repeat</keyword>
<keyword id="KW-1278">Translocase</keyword>
<keyword id="KW-0813">Transport</keyword>
<dbReference type="EC" id="7.-.-.-"/>
<dbReference type="EMBL" id="AE017226">
    <property type="protein sequence ID" value="AAS11397.1"/>
    <property type="molecule type" value="Genomic_DNA"/>
</dbReference>
<dbReference type="RefSeq" id="NP_971516.1">
    <property type="nucleotide sequence ID" value="NC_002967.9"/>
</dbReference>
<dbReference type="RefSeq" id="WP_002682198.1">
    <property type="nucleotide sequence ID" value="NC_002967.9"/>
</dbReference>
<dbReference type="SMR" id="Q73P93"/>
<dbReference type="STRING" id="243275.TDE_0906"/>
<dbReference type="PaxDb" id="243275-TDE_0906"/>
<dbReference type="GeneID" id="2739946"/>
<dbReference type="KEGG" id="tde:TDE_0906"/>
<dbReference type="PATRIC" id="fig|243275.7.peg.877"/>
<dbReference type="eggNOG" id="COG1129">
    <property type="taxonomic scope" value="Bacteria"/>
</dbReference>
<dbReference type="HOGENOM" id="CLU_000604_86_7_12"/>
<dbReference type="OrthoDB" id="9805565at2"/>
<dbReference type="Proteomes" id="UP000008212">
    <property type="component" value="Chromosome"/>
</dbReference>
<dbReference type="GO" id="GO:0043190">
    <property type="term" value="C:ATP-binding cassette (ABC) transporter complex"/>
    <property type="evidence" value="ECO:0007669"/>
    <property type="project" value="TreeGrafter"/>
</dbReference>
<dbReference type="GO" id="GO:0005524">
    <property type="term" value="F:ATP binding"/>
    <property type="evidence" value="ECO:0007669"/>
    <property type="project" value="UniProtKB-KW"/>
</dbReference>
<dbReference type="GO" id="GO:0016887">
    <property type="term" value="F:ATP hydrolysis activity"/>
    <property type="evidence" value="ECO:0007669"/>
    <property type="project" value="InterPro"/>
</dbReference>
<dbReference type="GO" id="GO:0042626">
    <property type="term" value="F:ATPase-coupled transmembrane transporter activity"/>
    <property type="evidence" value="ECO:0007669"/>
    <property type="project" value="TreeGrafter"/>
</dbReference>
<dbReference type="CDD" id="cd03225">
    <property type="entry name" value="ABC_cobalt_CbiO_domain1"/>
    <property type="match status" value="1"/>
</dbReference>
<dbReference type="CDD" id="cd03226">
    <property type="entry name" value="ABC_cobalt_CbiO_domain2"/>
    <property type="match status" value="1"/>
</dbReference>
<dbReference type="Gene3D" id="3.40.50.300">
    <property type="entry name" value="P-loop containing nucleotide triphosphate hydrolases"/>
    <property type="match status" value="2"/>
</dbReference>
<dbReference type="InterPro" id="IPR003593">
    <property type="entry name" value="AAA+_ATPase"/>
</dbReference>
<dbReference type="InterPro" id="IPR003439">
    <property type="entry name" value="ABC_transporter-like_ATP-bd"/>
</dbReference>
<dbReference type="InterPro" id="IPR017871">
    <property type="entry name" value="ABC_transporter-like_CS"/>
</dbReference>
<dbReference type="InterPro" id="IPR015856">
    <property type="entry name" value="ABC_transpr_CbiO/EcfA_su"/>
</dbReference>
<dbReference type="InterPro" id="IPR050095">
    <property type="entry name" value="ECF_ABC_transporter_ATP-bd"/>
</dbReference>
<dbReference type="InterPro" id="IPR027417">
    <property type="entry name" value="P-loop_NTPase"/>
</dbReference>
<dbReference type="PANTHER" id="PTHR43553:SF23">
    <property type="entry name" value="ABC TRANSPORTER ATP-BINDING COMPONENT"/>
    <property type="match status" value="1"/>
</dbReference>
<dbReference type="PANTHER" id="PTHR43553">
    <property type="entry name" value="HEAVY METAL TRANSPORTER"/>
    <property type="match status" value="1"/>
</dbReference>
<dbReference type="Pfam" id="PF00005">
    <property type="entry name" value="ABC_tran"/>
    <property type="match status" value="2"/>
</dbReference>
<dbReference type="SMART" id="SM00382">
    <property type="entry name" value="AAA"/>
    <property type="match status" value="2"/>
</dbReference>
<dbReference type="SUPFAM" id="SSF52540">
    <property type="entry name" value="P-loop containing nucleoside triphosphate hydrolases"/>
    <property type="match status" value="2"/>
</dbReference>
<dbReference type="PROSITE" id="PS00211">
    <property type="entry name" value="ABC_TRANSPORTER_1"/>
    <property type="match status" value="1"/>
</dbReference>
<dbReference type="PROSITE" id="PS50893">
    <property type="entry name" value="ABC_TRANSPORTER_2"/>
    <property type="match status" value="2"/>
</dbReference>
<reference key="1">
    <citation type="journal article" date="2004" name="Proc. Natl. Acad. Sci. U.S.A.">
        <title>Comparison of the genome of the oral pathogen Treponema denticola with other spirochete genomes.</title>
        <authorList>
            <person name="Seshadri R."/>
            <person name="Myers G.S.A."/>
            <person name="Tettelin H."/>
            <person name="Eisen J.A."/>
            <person name="Heidelberg J.F."/>
            <person name="Dodson R.J."/>
            <person name="Davidsen T.M."/>
            <person name="DeBoy R.T."/>
            <person name="Fouts D.E."/>
            <person name="Haft D.H."/>
            <person name="Selengut J."/>
            <person name="Ren Q."/>
            <person name="Brinkac L.M."/>
            <person name="Madupu R."/>
            <person name="Kolonay J.F."/>
            <person name="Durkin S.A."/>
            <person name="Daugherty S.C."/>
            <person name="Shetty J."/>
            <person name="Shvartsbeyn A."/>
            <person name="Gebregeorgis E."/>
            <person name="Geer K."/>
            <person name="Tsegaye G."/>
            <person name="Malek J.A."/>
            <person name="Ayodeji B."/>
            <person name="Shatsman S."/>
            <person name="McLeod M.P."/>
            <person name="Smajs D."/>
            <person name="Howell J.K."/>
            <person name="Pal S."/>
            <person name="Amin A."/>
            <person name="Vashisth P."/>
            <person name="McNeill T.Z."/>
            <person name="Xiang Q."/>
            <person name="Sodergren E."/>
            <person name="Baca E."/>
            <person name="Weinstock G.M."/>
            <person name="Norris S.J."/>
            <person name="Fraser C.M."/>
            <person name="Paulsen I.T."/>
        </authorList>
    </citation>
    <scope>NUCLEOTIDE SEQUENCE [LARGE SCALE GENOMIC DNA]</scope>
    <source>
        <strain>ATCC 35405 / DSM 14222 / CIP 103919 / JCM 8153 / KCTC 15104</strain>
    </source>
</reference>